<name>SYN_LISMO</name>
<comment type="catalytic activity">
    <reaction evidence="1">
        <text>tRNA(Asn) + L-asparagine + ATP = L-asparaginyl-tRNA(Asn) + AMP + diphosphate + H(+)</text>
        <dbReference type="Rhea" id="RHEA:11180"/>
        <dbReference type="Rhea" id="RHEA-COMP:9659"/>
        <dbReference type="Rhea" id="RHEA-COMP:9674"/>
        <dbReference type="ChEBI" id="CHEBI:15378"/>
        <dbReference type="ChEBI" id="CHEBI:30616"/>
        <dbReference type="ChEBI" id="CHEBI:33019"/>
        <dbReference type="ChEBI" id="CHEBI:58048"/>
        <dbReference type="ChEBI" id="CHEBI:78442"/>
        <dbReference type="ChEBI" id="CHEBI:78515"/>
        <dbReference type="ChEBI" id="CHEBI:456215"/>
        <dbReference type="EC" id="6.1.1.22"/>
    </reaction>
</comment>
<comment type="subunit">
    <text evidence="1">Homodimer.</text>
</comment>
<comment type="subcellular location">
    <subcellularLocation>
        <location evidence="1">Cytoplasm</location>
    </subcellularLocation>
</comment>
<comment type="similarity">
    <text evidence="1">Belongs to the class-II aminoacyl-tRNA synthetase family.</text>
</comment>
<accession>P58695</accession>
<dbReference type="EC" id="6.1.1.22" evidence="1"/>
<dbReference type="EMBL" id="AL591981">
    <property type="protein sequence ID" value="CAC99974.1"/>
    <property type="molecule type" value="Genomic_DNA"/>
</dbReference>
<dbReference type="PIR" id="AH1311">
    <property type="entry name" value="AH1311"/>
</dbReference>
<dbReference type="RefSeq" id="WP_003723006.1">
    <property type="nucleotide sequence ID" value="NZ_CP149495.1"/>
</dbReference>
<dbReference type="SMR" id="P58695"/>
<dbReference type="STRING" id="169963.gene:17594581"/>
<dbReference type="PaxDb" id="169963-lmo1896"/>
<dbReference type="EnsemblBacteria" id="CAC99974">
    <property type="protein sequence ID" value="CAC99974"/>
    <property type="gene ID" value="CAC99974"/>
</dbReference>
<dbReference type="KEGG" id="lmo:lmo1896"/>
<dbReference type="PATRIC" id="fig|169963.11.peg.1942"/>
<dbReference type="eggNOG" id="COG0017">
    <property type="taxonomic scope" value="Bacteria"/>
</dbReference>
<dbReference type="HOGENOM" id="CLU_004553_2_0_9"/>
<dbReference type="OrthoDB" id="9762036at2"/>
<dbReference type="PhylomeDB" id="P58695"/>
<dbReference type="BioCyc" id="LMON169963:LMO1896-MONOMER"/>
<dbReference type="Proteomes" id="UP000000817">
    <property type="component" value="Chromosome"/>
</dbReference>
<dbReference type="GO" id="GO:0005737">
    <property type="term" value="C:cytoplasm"/>
    <property type="evidence" value="ECO:0007669"/>
    <property type="project" value="UniProtKB-SubCell"/>
</dbReference>
<dbReference type="GO" id="GO:0004816">
    <property type="term" value="F:asparagine-tRNA ligase activity"/>
    <property type="evidence" value="ECO:0007669"/>
    <property type="project" value="UniProtKB-UniRule"/>
</dbReference>
<dbReference type="GO" id="GO:0005524">
    <property type="term" value="F:ATP binding"/>
    <property type="evidence" value="ECO:0007669"/>
    <property type="project" value="UniProtKB-UniRule"/>
</dbReference>
<dbReference type="GO" id="GO:0140096">
    <property type="term" value="F:catalytic activity, acting on a protein"/>
    <property type="evidence" value="ECO:0007669"/>
    <property type="project" value="UniProtKB-ARBA"/>
</dbReference>
<dbReference type="GO" id="GO:0003676">
    <property type="term" value="F:nucleic acid binding"/>
    <property type="evidence" value="ECO:0007669"/>
    <property type="project" value="InterPro"/>
</dbReference>
<dbReference type="GO" id="GO:0016740">
    <property type="term" value="F:transferase activity"/>
    <property type="evidence" value="ECO:0007669"/>
    <property type="project" value="UniProtKB-ARBA"/>
</dbReference>
<dbReference type="GO" id="GO:0006421">
    <property type="term" value="P:asparaginyl-tRNA aminoacylation"/>
    <property type="evidence" value="ECO:0000318"/>
    <property type="project" value="GO_Central"/>
</dbReference>
<dbReference type="CDD" id="cd04323">
    <property type="entry name" value="AsnRS_cyto_like_N"/>
    <property type="match status" value="1"/>
</dbReference>
<dbReference type="CDD" id="cd00776">
    <property type="entry name" value="AsxRS_core"/>
    <property type="match status" value="1"/>
</dbReference>
<dbReference type="Gene3D" id="3.30.930.10">
    <property type="entry name" value="Bira Bifunctional Protein, Domain 2"/>
    <property type="match status" value="1"/>
</dbReference>
<dbReference type="Gene3D" id="2.40.50.140">
    <property type="entry name" value="Nucleic acid-binding proteins"/>
    <property type="match status" value="1"/>
</dbReference>
<dbReference type="HAMAP" id="MF_00534">
    <property type="entry name" value="Asn_tRNA_synth"/>
    <property type="match status" value="1"/>
</dbReference>
<dbReference type="InterPro" id="IPR004364">
    <property type="entry name" value="Aa-tRNA-synt_II"/>
</dbReference>
<dbReference type="InterPro" id="IPR006195">
    <property type="entry name" value="aa-tRNA-synth_II"/>
</dbReference>
<dbReference type="InterPro" id="IPR045864">
    <property type="entry name" value="aa-tRNA-synth_II/BPL/LPL"/>
</dbReference>
<dbReference type="InterPro" id="IPR004522">
    <property type="entry name" value="Asn-tRNA-ligase"/>
</dbReference>
<dbReference type="InterPro" id="IPR002312">
    <property type="entry name" value="Asp/Asn-tRNA-synth_IIb"/>
</dbReference>
<dbReference type="InterPro" id="IPR012340">
    <property type="entry name" value="NA-bd_OB-fold"/>
</dbReference>
<dbReference type="InterPro" id="IPR004365">
    <property type="entry name" value="NA-bd_OB_tRNA"/>
</dbReference>
<dbReference type="NCBIfam" id="TIGR00457">
    <property type="entry name" value="asnS"/>
    <property type="match status" value="1"/>
</dbReference>
<dbReference type="NCBIfam" id="NF003037">
    <property type="entry name" value="PRK03932.1"/>
    <property type="match status" value="1"/>
</dbReference>
<dbReference type="NCBIfam" id="NF003483">
    <property type="entry name" value="PRK05159.1"/>
    <property type="match status" value="1"/>
</dbReference>
<dbReference type="PANTHER" id="PTHR22594:SF34">
    <property type="entry name" value="ASPARAGINE--TRNA LIGASE, MITOCHONDRIAL-RELATED"/>
    <property type="match status" value="1"/>
</dbReference>
<dbReference type="PANTHER" id="PTHR22594">
    <property type="entry name" value="ASPARTYL/LYSYL-TRNA SYNTHETASE"/>
    <property type="match status" value="1"/>
</dbReference>
<dbReference type="Pfam" id="PF00152">
    <property type="entry name" value="tRNA-synt_2"/>
    <property type="match status" value="1"/>
</dbReference>
<dbReference type="Pfam" id="PF01336">
    <property type="entry name" value="tRNA_anti-codon"/>
    <property type="match status" value="1"/>
</dbReference>
<dbReference type="PRINTS" id="PR01042">
    <property type="entry name" value="TRNASYNTHASP"/>
</dbReference>
<dbReference type="SUPFAM" id="SSF55681">
    <property type="entry name" value="Class II aaRS and biotin synthetases"/>
    <property type="match status" value="1"/>
</dbReference>
<dbReference type="SUPFAM" id="SSF50249">
    <property type="entry name" value="Nucleic acid-binding proteins"/>
    <property type="match status" value="1"/>
</dbReference>
<dbReference type="PROSITE" id="PS50862">
    <property type="entry name" value="AA_TRNA_LIGASE_II"/>
    <property type="match status" value="1"/>
</dbReference>
<proteinExistence type="inferred from homology"/>
<gene>
    <name evidence="1" type="primary">asnS</name>
    <name type="ordered locus">lmo1896</name>
</gene>
<evidence type="ECO:0000255" key="1">
    <source>
        <dbReference type="HAMAP-Rule" id="MF_00534"/>
    </source>
</evidence>
<reference key="1">
    <citation type="journal article" date="2001" name="Science">
        <title>Comparative genomics of Listeria species.</title>
        <authorList>
            <person name="Glaser P."/>
            <person name="Frangeul L."/>
            <person name="Buchrieser C."/>
            <person name="Rusniok C."/>
            <person name="Amend A."/>
            <person name="Baquero F."/>
            <person name="Berche P."/>
            <person name="Bloecker H."/>
            <person name="Brandt P."/>
            <person name="Chakraborty T."/>
            <person name="Charbit A."/>
            <person name="Chetouani F."/>
            <person name="Couve E."/>
            <person name="de Daruvar A."/>
            <person name="Dehoux P."/>
            <person name="Domann E."/>
            <person name="Dominguez-Bernal G."/>
            <person name="Duchaud E."/>
            <person name="Durant L."/>
            <person name="Dussurget O."/>
            <person name="Entian K.-D."/>
            <person name="Fsihi H."/>
            <person name="Garcia-del Portillo F."/>
            <person name="Garrido P."/>
            <person name="Gautier L."/>
            <person name="Goebel W."/>
            <person name="Gomez-Lopez N."/>
            <person name="Hain T."/>
            <person name="Hauf J."/>
            <person name="Jackson D."/>
            <person name="Jones L.-M."/>
            <person name="Kaerst U."/>
            <person name="Kreft J."/>
            <person name="Kuhn M."/>
            <person name="Kunst F."/>
            <person name="Kurapkat G."/>
            <person name="Madueno E."/>
            <person name="Maitournam A."/>
            <person name="Mata Vicente J."/>
            <person name="Ng E."/>
            <person name="Nedjari H."/>
            <person name="Nordsiek G."/>
            <person name="Novella S."/>
            <person name="de Pablos B."/>
            <person name="Perez-Diaz J.-C."/>
            <person name="Purcell R."/>
            <person name="Remmel B."/>
            <person name="Rose M."/>
            <person name="Schlueter T."/>
            <person name="Simoes N."/>
            <person name="Tierrez A."/>
            <person name="Vazquez-Boland J.-A."/>
            <person name="Voss H."/>
            <person name="Wehland J."/>
            <person name="Cossart P."/>
        </authorList>
    </citation>
    <scope>NUCLEOTIDE SEQUENCE [LARGE SCALE GENOMIC DNA]</scope>
    <source>
        <strain>ATCC BAA-679 / EGD-e</strain>
    </source>
</reference>
<protein>
    <recommendedName>
        <fullName evidence="1">Asparagine--tRNA ligase</fullName>
        <ecNumber evidence="1">6.1.1.22</ecNumber>
    </recommendedName>
    <alternativeName>
        <fullName evidence="1">Asparaginyl-tRNA synthetase</fullName>
        <shortName evidence="1">AsnRS</shortName>
    </alternativeName>
</protein>
<organism>
    <name type="scientific">Listeria monocytogenes serovar 1/2a (strain ATCC BAA-679 / EGD-e)</name>
    <dbReference type="NCBI Taxonomy" id="169963"/>
    <lineage>
        <taxon>Bacteria</taxon>
        <taxon>Bacillati</taxon>
        <taxon>Bacillota</taxon>
        <taxon>Bacilli</taxon>
        <taxon>Bacillales</taxon>
        <taxon>Listeriaceae</taxon>
        <taxon>Listeria</taxon>
    </lineage>
</organism>
<feature type="chain" id="PRO_0000176424" description="Asparagine--tRNA ligase">
    <location>
        <begin position="1"/>
        <end position="430"/>
    </location>
</feature>
<sequence>MKITINQASEFVGKEVTIGAWLANKRSSGKIAFLQLRDGTGFMQGVVVKAEVGDDIFATAKALTQETSLYVTGTINEDTRSPFGYEMAVSSVEVISESHDYPITPKEHGTEFLMDHRHLWLRSNRQHAIMKIRNEIIRASYEFFNKEGFLKIDPPILTGSAPEGTTELFHTKYFEEDAFLSQSGQLYMEAAAMAFGKVFSFGPTFRAEKSKTRRHLIEFWMIEPEMAFYKLEDSLQVQENYVAFLVKAVLDNCRLELDRLGRDVSHLEKMVAPFPRITYTEAIERLHELGFDDIVWGDDFGAPHETAIADSFEKPVFITHYPKAIKPFYMPEDPENDQVVLCADMIAPEGYGEIIGGSERIHDLETLQARMEDFDLDQEAYSWYLDLARYGSVPHSGFGLGLERTVAWISGTEHVRETIPFPRLLNRLYP</sequence>
<keyword id="KW-0030">Aminoacyl-tRNA synthetase</keyword>
<keyword id="KW-0067">ATP-binding</keyword>
<keyword id="KW-0963">Cytoplasm</keyword>
<keyword id="KW-0436">Ligase</keyword>
<keyword id="KW-0547">Nucleotide-binding</keyword>
<keyword id="KW-0648">Protein biosynthesis</keyword>
<keyword id="KW-1185">Reference proteome</keyword>